<feature type="chain" id="PRO_0000370637" description="Snaclec bothroinsularin subunit alpha">
    <location>
        <begin position="1"/>
        <end position="132"/>
    </location>
</feature>
<feature type="domain" description="C-type lectin" evidence="1">
    <location>
        <begin position="9"/>
        <end position="128"/>
    </location>
</feature>
<feature type="disulfide bond" evidence="1">
    <location>
        <begin position="2"/>
        <end position="13"/>
    </location>
</feature>
<feature type="disulfide bond" evidence="1">
    <location>
        <begin position="30"/>
        <end position="127"/>
    </location>
</feature>
<feature type="disulfide bond" description="Interchain (with C-75 in beta chain)" evidence="1">
    <location>
        <position position="79"/>
    </location>
</feature>
<feature type="disulfide bond" evidence="1">
    <location>
        <begin position="102"/>
        <end position="119"/>
    </location>
</feature>
<proteinExistence type="evidence at protein level"/>
<name>SLA_BOTIN</name>
<evidence type="ECO:0000255" key="1">
    <source>
        <dbReference type="PROSITE-ProRule" id="PRU00040"/>
    </source>
</evidence>
<evidence type="ECO:0000269" key="2">
    <source>
    </source>
</evidence>
<evidence type="ECO:0000305" key="3"/>
<keyword id="KW-1203">Blood coagulation cascade inhibiting toxin</keyword>
<keyword id="KW-0903">Direct protein sequencing</keyword>
<keyword id="KW-1015">Disulfide bond</keyword>
<keyword id="KW-1199">Hemostasis impairing toxin</keyword>
<keyword id="KW-1201">Platelet aggregation inhibiting toxin</keyword>
<keyword id="KW-0964">Secreted</keyword>
<keyword id="KW-0800">Toxin</keyword>
<reference key="1">
    <citation type="journal article" date="2008" name="Toxicon">
        <title>Identification and characterization of a new member of snake venom thrombin inhibitors from Bothrops insularis using a proteomic approach.</title>
        <authorList>
            <person name="Oliveira-Carvalho A.L."/>
            <person name="Guimaraes P.R."/>
            <person name="Abreu P.A."/>
            <person name="Dutra D.L.S."/>
            <person name="Junqueira-de-Azevedo I.L.M."/>
            <person name="Rodrigues C.R."/>
            <person name="Ho P.L."/>
            <person name="Castro H.C."/>
            <person name="Zingali R.B."/>
        </authorList>
    </citation>
    <scope>PROTEIN SEQUENCE</scope>
    <scope>FUNCTION</scope>
    <scope>SUBUNIT</scope>
    <scope>SUBCELLULAR LOCATION</scope>
    <scope>TISSUE SPECIFICITY</scope>
    <source>
        <tissue>Venom</tissue>
    </source>
</reference>
<comment type="function">
    <text evidence="2">Thrombin and prothrombin (F2) inhibitor. The IC(50) of thrombin-induced platelet aggregation and fibrinocoagulation is 62 and 35 nM, respectively. Its inhibitory activity is at least 10-fold lower than that observed for other thrombin inhibitors.</text>
</comment>
<comment type="subunit">
    <text evidence="2">Heterodimer of subunits alpha and beta; disulfide-linked.</text>
</comment>
<comment type="subcellular location">
    <subcellularLocation>
        <location evidence="2">Secreted</location>
    </subcellularLocation>
</comment>
<comment type="tissue specificity">
    <text evidence="2">Expressed by the venom gland.</text>
</comment>
<comment type="similarity">
    <text evidence="3">Belongs to the snaclec family.</text>
</comment>
<sequence length="132" mass="15209">DCPSDWSPYGQYCYKFFQQKMNWADAERFCSEQAKGGHLVSFQSDGETDFVVNLVTEKIQSSDLYAWIGLRVQNKEKQCSSKWSDGSSVSYENVVGRTVKKCFALEKEQEFFVWINIYCGQQNPFVCKSPPP</sequence>
<accession>P0C929</accession>
<dbReference type="SMR" id="P0C929"/>
<dbReference type="GO" id="GO:0005576">
    <property type="term" value="C:extracellular region"/>
    <property type="evidence" value="ECO:0007669"/>
    <property type="project" value="UniProtKB-SubCell"/>
</dbReference>
<dbReference type="GO" id="GO:0090729">
    <property type="term" value="F:toxin activity"/>
    <property type="evidence" value="ECO:0007669"/>
    <property type="project" value="UniProtKB-KW"/>
</dbReference>
<dbReference type="FunFam" id="3.10.100.10:FF:000087">
    <property type="entry name" value="Snaclec rhodocetin subunit delta"/>
    <property type="match status" value="1"/>
</dbReference>
<dbReference type="Gene3D" id="3.10.100.10">
    <property type="entry name" value="Mannose-Binding Protein A, subunit A"/>
    <property type="match status" value="1"/>
</dbReference>
<dbReference type="InterPro" id="IPR001304">
    <property type="entry name" value="C-type_lectin-like"/>
</dbReference>
<dbReference type="InterPro" id="IPR016186">
    <property type="entry name" value="C-type_lectin-like/link_sf"/>
</dbReference>
<dbReference type="InterPro" id="IPR050111">
    <property type="entry name" value="C-type_lectin/snaclec_domain"/>
</dbReference>
<dbReference type="InterPro" id="IPR018378">
    <property type="entry name" value="C-type_lectin_CS"/>
</dbReference>
<dbReference type="InterPro" id="IPR016187">
    <property type="entry name" value="CTDL_fold"/>
</dbReference>
<dbReference type="PANTHER" id="PTHR22803">
    <property type="entry name" value="MANNOSE, PHOSPHOLIPASE, LECTIN RECEPTOR RELATED"/>
    <property type="match status" value="1"/>
</dbReference>
<dbReference type="Pfam" id="PF00059">
    <property type="entry name" value="Lectin_C"/>
    <property type="match status" value="1"/>
</dbReference>
<dbReference type="SMART" id="SM00034">
    <property type="entry name" value="CLECT"/>
    <property type="match status" value="1"/>
</dbReference>
<dbReference type="SUPFAM" id="SSF56436">
    <property type="entry name" value="C-type lectin-like"/>
    <property type="match status" value="1"/>
</dbReference>
<dbReference type="PROSITE" id="PS00615">
    <property type="entry name" value="C_TYPE_LECTIN_1"/>
    <property type="match status" value="1"/>
</dbReference>
<dbReference type="PROSITE" id="PS50041">
    <property type="entry name" value="C_TYPE_LECTIN_2"/>
    <property type="match status" value="1"/>
</dbReference>
<organism>
    <name type="scientific">Bothrops insularis</name>
    <name type="common">Golden lancehead</name>
    <name type="synonym">Lachesis insularis</name>
    <dbReference type="NCBI Taxonomy" id="8723"/>
    <lineage>
        <taxon>Eukaryota</taxon>
        <taxon>Metazoa</taxon>
        <taxon>Chordata</taxon>
        <taxon>Craniata</taxon>
        <taxon>Vertebrata</taxon>
        <taxon>Euteleostomi</taxon>
        <taxon>Lepidosauria</taxon>
        <taxon>Squamata</taxon>
        <taxon>Bifurcata</taxon>
        <taxon>Unidentata</taxon>
        <taxon>Episquamata</taxon>
        <taxon>Toxicofera</taxon>
        <taxon>Serpentes</taxon>
        <taxon>Colubroidea</taxon>
        <taxon>Viperidae</taxon>
        <taxon>Crotalinae</taxon>
        <taxon>Bothrops</taxon>
    </lineage>
</organism>
<protein>
    <recommendedName>
        <fullName>Snaclec bothroinsularin subunit alpha</fullName>
        <shortName>BIN</shortName>
    </recommendedName>
</protein>